<organism>
    <name type="scientific">Gallus gallus</name>
    <name type="common">Chicken</name>
    <dbReference type="NCBI Taxonomy" id="9031"/>
    <lineage>
        <taxon>Eukaryota</taxon>
        <taxon>Metazoa</taxon>
        <taxon>Chordata</taxon>
        <taxon>Craniata</taxon>
        <taxon>Vertebrata</taxon>
        <taxon>Euteleostomi</taxon>
        <taxon>Archelosauria</taxon>
        <taxon>Archosauria</taxon>
        <taxon>Dinosauria</taxon>
        <taxon>Saurischia</taxon>
        <taxon>Theropoda</taxon>
        <taxon>Coelurosauria</taxon>
        <taxon>Aves</taxon>
        <taxon>Neognathae</taxon>
        <taxon>Galloanserae</taxon>
        <taxon>Galliformes</taxon>
        <taxon>Phasianidae</taxon>
        <taxon>Phasianinae</taxon>
        <taxon>Gallus</taxon>
    </lineage>
</organism>
<dbReference type="EMBL" id="U12534">
    <property type="protein sequence ID" value="AAB09664.1"/>
    <property type="molecule type" value="mRNA"/>
</dbReference>
<dbReference type="PIR" id="I50707">
    <property type="entry name" value="I50707"/>
</dbReference>
<dbReference type="RefSeq" id="NP_990518.1">
    <property type="nucleotide sequence ID" value="NM_205187.1"/>
</dbReference>
<dbReference type="SMR" id="P48435"/>
<dbReference type="FunCoup" id="P48435">
    <property type="interactions" value="14"/>
</dbReference>
<dbReference type="KEGG" id="gga:396104"/>
<dbReference type="VEuPathDB" id="HostDB:geneid_396104"/>
<dbReference type="eggNOG" id="KOG0527">
    <property type="taxonomic scope" value="Eukaryota"/>
</dbReference>
<dbReference type="InParanoid" id="P48435"/>
<dbReference type="OrthoDB" id="6247875at2759"/>
<dbReference type="PhylomeDB" id="P48435"/>
<dbReference type="PRO" id="PR:P48435"/>
<dbReference type="Proteomes" id="UP000000539">
    <property type="component" value="Unassembled WGS sequence"/>
</dbReference>
<dbReference type="GO" id="GO:0005634">
    <property type="term" value="C:nucleus"/>
    <property type="evidence" value="ECO:0000318"/>
    <property type="project" value="GO_Central"/>
</dbReference>
<dbReference type="GO" id="GO:0003677">
    <property type="term" value="F:DNA binding"/>
    <property type="evidence" value="ECO:0000250"/>
    <property type="project" value="UniProtKB"/>
</dbReference>
<dbReference type="GO" id="GO:0001228">
    <property type="term" value="F:DNA-binding transcription activator activity, RNA polymerase II-specific"/>
    <property type="evidence" value="ECO:0000318"/>
    <property type="project" value="GO_Central"/>
</dbReference>
<dbReference type="GO" id="GO:0000978">
    <property type="term" value="F:RNA polymerase II cis-regulatory region sequence-specific DNA binding"/>
    <property type="evidence" value="ECO:0000318"/>
    <property type="project" value="GO_Central"/>
</dbReference>
<dbReference type="GO" id="GO:0007420">
    <property type="term" value="P:brain development"/>
    <property type="evidence" value="ECO:0000318"/>
    <property type="project" value="GO_Central"/>
</dbReference>
<dbReference type="GO" id="GO:0048593">
    <property type="term" value="P:camera-type eye morphogenesis"/>
    <property type="evidence" value="ECO:0000318"/>
    <property type="project" value="GO_Central"/>
</dbReference>
<dbReference type="GO" id="GO:0000122">
    <property type="term" value="P:negative regulation of transcription by RNA polymerase II"/>
    <property type="evidence" value="ECO:0000318"/>
    <property type="project" value="GO_Central"/>
</dbReference>
<dbReference type="GO" id="GO:0030182">
    <property type="term" value="P:neuron differentiation"/>
    <property type="evidence" value="ECO:0000318"/>
    <property type="project" value="GO_Central"/>
</dbReference>
<dbReference type="GO" id="GO:0090263">
    <property type="term" value="P:positive regulation of canonical Wnt signaling pathway"/>
    <property type="evidence" value="ECO:0000314"/>
    <property type="project" value="UniProtKB"/>
</dbReference>
<dbReference type="GO" id="GO:0045944">
    <property type="term" value="P:positive regulation of transcription by RNA polymerase II"/>
    <property type="evidence" value="ECO:0000318"/>
    <property type="project" value="GO_Central"/>
</dbReference>
<dbReference type="CDD" id="cd22037">
    <property type="entry name" value="HMG-box_SoxC_SOX11"/>
    <property type="match status" value="1"/>
</dbReference>
<dbReference type="FunFam" id="1.10.30.10:FF:000007">
    <property type="entry name" value="Transcription factor SOX"/>
    <property type="match status" value="1"/>
</dbReference>
<dbReference type="Gene3D" id="1.10.30.10">
    <property type="entry name" value="High mobility group box domain"/>
    <property type="match status" value="1"/>
</dbReference>
<dbReference type="InterPro" id="IPR009071">
    <property type="entry name" value="HMG_box_dom"/>
</dbReference>
<dbReference type="InterPro" id="IPR036910">
    <property type="entry name" value="HMG_box_dom_sf"/>
</dbReference>
<dbReference type="InterPro" id="IPR017386">
    <property type="entry name" value="SOX-12/11/4"/>
</dbReference>
<dbReference type="InterPro" id="IPR050140">
    <property type="entry name" value="SRY-related_HMG-box_TF-like"/>
</dbReference>
<dbReference type="PANTHER" id="PTHR10270">
    <property type="entry name" value="SOX TRANSCRIPTION FACTOR"/>
    <property type="match status" value="1"/>
</dbReference>
<dbReference type="PANTHER" id="PTHR10270:SF113">
    <property type="entry name" value="TRANSCRIPTION FACTOR SOX-11"/>
    <property type="match status" value="1"/>
</dbReference>
<dbReference type="Pfam" id="PF00505">
    <property type="entry name" value="HMG_box"/>
    <property type="match status" value="1"/>
</dbReference>
<dbReference type="PIRSF" id="PIRSF038098">
    <property type="entry name" value="SOX-12/11/4a"/>
    <property type="match status" value="1"/>
</dbReference>
<dbReference type="SMART" id="SM00398">
    <property type="entry name" value="HMG"/>
    <property type="match status" value="1"/>
</dbReference>
<dbReference type="SUPFAM" id="SSF47095">
    <property type="entry name" value="HMG-box"/>
    <property type="match status" value="1"/>
</dbReference>
<dbReference type="PROSITE" id="PS50118">
    <property type="entry name" value="HMG_BOX_2"/>
    <property type="match status" value="1"/>
</dbReference>
<accession>P48435</accession>
<reference key="1">
    <citation type="journal article" date="1995" name="Mech. Dev.">
        <title>Embryonic expression of the chicken Sox2, Sox3 and Sox11 genes suggests an interactive role in neuronal development.</title>
        <authorList>
            <person name="Uwanogho D."/>
            <person name="Rex M."/>
            <person name="Cartwright E.J."/>
            <person name="Pearl G."/>
            <person name="Healy C."/>
            <person name="Scotting P.J."/>
            <person name="Sharpe P.T."/>
        </authorList>
    </citation>
    <scope>NUCLEOTIDE SEQUENCE [MRNA]</scope>
    <scope>TISSUE SPECIFICITY</scope>
    <scope>DEVELOPMENTAL STAGE</scope>
    <source>
        <tissue>Embryo</tissue>
    </source>
</reference>
<gene>
    <name type="primary">SOX11</name>
</gene>
<comment type="function">
    <text evidence="1 4">Transcription factor that acts as a transcriptional activator (By similarity). May function as a switch in neuronal development (PubMed:7748786).</text>
</comment>
<comment type="subcellular location">
    <subcellularLocation>
        <location evidence="2">Nucleus</location>
    </subcellularLocation>
</comment>
<comment type="tissue specificity">
    <text evidence="4">Low level expression is seen in undifferentiated proliferating cells of the neural epithelium. Greater expression is seen in the maturing neurons after they leave the neural epithelium. Also expressed in the embryonic gut epithelium and adrenal medulla.</text>
</comment>
<comment type="developmental stage">
    <text evidence="4">Expression is maximal at stages 24-31, then begins to decline. Expression is low by stage 37 and disappears by stage 39. Does not appear to be expressed in adults.</text>
</comment>
<feature type="chain" id="PRO_0000048752" description="Transcription factor SOX-11">
    <location>
        <begin position="1"/>
        <end position="396"/>
    </location>
</feature>
<feature type="DNA-binding region" description="HMG box" evidence="2">
    <location>
        <begin position="49"/>
        <end position="117"/>
    </location>
</feature>
<feature type="region of interest" description="Disordered" evidence="3">
    <location>
        <begin position="1"/>
        <end position="22"/>
    </location>
</feature>
<feature type="region of interest" description="Disordered" evidence="3">
    <location>
        <begin position="116"/>
        <end position="180"/>
    </location>
</feature>
<feature type="region of interest" description="Disordered" evidence="3">
    <location>
        <begin position="203"/>
        <end position="261"/>
    </location>
</feature>
<feature type="compositionally biased region" description="Polar residues" evidence="3">
    <location>
        <begin position="1"/>
        <end position="13"/>
    </location>
</feature>
<feature type="compositionally biased region" description="Low complexity" evidence="3">
    <location>
        <begin position="160"/>
        <end position="175"/>
    </location>
</feature>
<feature type="compositionally biased region" description="Acidic residues" evidence="3">
    <location>
        <begin position="203"/>
        <end position="214"/>
    </location>
</feature>
<feature type="compositionally biased region" description="Acidic residues" evidence="3">
    <location>
        <begin position="223"/>
        <end position="232"/>
    </location>
</feature>
<feature type="compositionally biased region" description="Polar residues" evidence="3">
    <location>
        <begin position="249"/>
        <end position="260"/>
    </location>
</feature>
<evidence type="ECO:0000250" key="1">
    <source>
        <dbReference type="UniProtKB" id="Q7M6Y2"/>
    </source>
</evidence>
<evidence type="ECO:0000255" key="2">
    <source>
        <dbReference type="PROSITE-ProRule" id="PRU00267"/>
    </source>
</evidence>
<evidence type="ECO:0000256" key="3">
    <source>
        <dbReference type="SAM" id="MobiDB-lite"/>
    </source>
</evidence>
<evidence type="ECO:0000269" key="4">
    <source>
    </source>
</evidence>
<sequence length="396" mass="43504">MVQQAESAESESNLPREAMDTEEGEFMACSPVALDESDPDWCKTASGHIKRPMNAFMVWSKIERRKIMEQSPDMHNAEISKRLGKRWKMLKDSEKIPFIREAERLRLKHMADYPDYKYRPRKKPKMDPSAKPNAGQSPEKNAPGGGSKSAKSSGKKCSKLKAAAASPPKPGAKAAPHGDYAGDEYVFGALKVSSKAVKCVFVDEEEEDEEDEDELQLRIKQEADDEEEDEEPGPQQLRRYNVAKVPASPTLSSSAESTEGASLYEEVRGAAGGGRLYYSFKNITKQGPPPPQPPAGLSPASVPLHLHLVGRQRGGGRPPVRPQPQLLAAWPRRRRAGGGAAAGNLSLSLVDKDLDSFSEGSLGSHFEFPDYCTPELSEMIAGDWLEANFSDLVFTY</sequence>
<proteinExistence type="evidence at transcript level"/>
<protein>
    <recommendedName>
        <fullName>Transcription factor SOX-11</fullName>
        <shortName>cSox11</shortName>
    </recommendedName>
</protein>
<name>SOX11_CHICK</name>
<keyword id="KW-0010">Activator</keyword>
<keyword id="KW-0217">Developmental protein</keyword>
<keyword id="KW-0221">Differentiation</keyword>
<keyword id="KW-0238">DNA-binding</keyword>
<keyword id="KW-0524">Neurogenesis</keyword>
<keyword id="KW-0539">Nucleus</keyword>
<keyword id="KW-1185">Reference proteome</keyword>
<keyword id="KW-0804">Transcription</keyword>
<keyword id="KW-0805">Transcription regulation</keyword>